<sequence>MLKREMNIADYDADLWRAMEQEVVRQEEHIELIASENYTSPRVMQAQGSQLTNKYAEGYPGKRYYGGCEYVDVVEQLAIDRAKALFGADYANVQPHSGSQANVAVYSALLKPGDTVLGMNLAHGGHLTHGSPVNFSGKLYNIVPYGIDESGQIDYEDLARQAEIHKPKMIIGGFSAYSGIVDWAKMREIADSIDAWFFVDMAHVAGLVAAGVYPNPVPHAHIVTTTTHKTLAGPRGGLILAKGGDEDLYKKLNSSVFPGNQGGPLMHVIAGKAVALKEAMEPEFKIYQQQVAKNAKAMVAVFLERGYKVVSGGTDNHLFLLDLVDKDITGKDADAALGRANITVNKNSVPNDPKSPFVTSGVRIGSPAITRRGFKEAESRELAGWMCDVLDNINDEATIERVKQKVLAICARLPVYA</sequence>
<dbReference type="EC" id="2.1.2.1" evidence="1"/>
<dbReference type="EMBL" id="BX936398">
    <property type="protein sequence ID" value="CAH22107.1"/>
    <property type="molecule type" value="Genomic_DNA"/>
</dbReference>
<dbReference type="RefSeq" id="WP_002211552.1">
    <property type="nucleotide sequence ID" value="NZ_CP009712.1"/>
</dbReference>
<dbReference type="SMR" id="Q667X1"/>
<dbReference type="GeneID" id="57975864"/>
<dbReference type="KEGG" id="ypo:BZ17_3763"/>
<dbReference type="KEGG" id="yps:YPTB2869"/>
<dbReference type="PATRIC" id="fig|273123.14.peg.3947"/>
<dbReference type="UniPathway" id="UPA00193"/>
<dbReference type="UniPathway" id="UPA00288">
    <property type="reaction ID" value="UER01023"/>
</dbReference>
<dbReference type="Proteomes" id="UP000001011">
    <property type="component" value="Chromosome"/>
</dbReference>
<dbReference type="GO" id="GO:0005829">
    <property type="term" value="C:cytosol"/>
    <property type="evidence" value="ECO:0007669"/>
    <property type="project" value="TreeGrafter"/>
</dbReference>
<dbReference type="GO" id="GO:0004372">
    <property type="term" value="F:glycine hydroxymethyltransferase activity"/>
    <property type="evidence" value="ECO:0007669"/>
    <property type="project" value="UniProtKB-UniRule"/>
</dbReference>
<dbReference type="GO" id="GO:0030170">
    <property type="term" value="F:pyridoxal phosphate binding"/>
    <property type="evidence" value="ECO:0007669"/>
    <property type="project" value="UniProtKB-UniRule"/>
</dbReference>
<dbReference type="GO" id="GO:0019264">
    <property type="term" value="P:glycine biosynthetic process from serine"/>
    <property type="evidence" value="ECO:0007669"/>
    <property type="project" value="UniProtKB-UniRule"/>
</dbReference>
<dbReference type="GO" id="GO:0035999">
    <property type="term" value="P:tetrahydrofolate interconversion"/>
    <property type="evidence" value="ECO:0007669"/>
    <property type="project" value="UniProtKB-UniRule"/>
</dbReference>
<dbReference type="CDD" id="cd00378">
    <property type="entry name" value="SHMT"/>
    <property type="match status" value="1"/>
</dbReference>
<dbReference type="FunFam" id="3.40.640.10:FF:000001">
    <property type="entry name" value="Serine hydroxymethyltransferase"/>
    <property type="match status" value="1"/>
</dbReference>
<dbReference type="FunFam" id="3.90.1150.10:FF:000003">
    <property type="entry name" value="Serine hydroxymethyltransferase"/>
    <property type="match status" value="1"/>
</dbReference>
<dbReference type="Gene3D" id="3.90.1150.10">
    <property type="entry name" value="Aspartate Aminotransferase, domain 1"/>
    <property type="match status" value="1"/>
</dbReference>
<dbReference type="Gene3D" id="3.40.640.10">
    <property type="entry name" value="Type I PLP-dependent aspartate aminotransferase-like (Major domain)"/>
    <property type="match status" value="1"/>
</dbReference>
<dbReference type="HAMAP" id="MF_00051">
    <property type="entry name" value="SHMT"/>
    <property type="match status" value="1"/>
</dbReference>
<dbReference type="InterPro" id="IPR015424">
    <property type="entry name" value="PyrdxlP-dep_Trfase"/>
</dbReference>
<dbReference type="InterPro" id="IPR015421">
    <property type="entry name" value="PyrdxlP-dep_Trfase_major"/>
</dbReference>
<dbReference type="InterPro" id="IPR015422">
    <property type="entry name" value="PyrdxlP-dep_Trfase_small"/>
</dbReference>
<dbReference type="InterPro" id="IPR001085">
    <property type="entry name" value="Ser_HO-MeTrfase"/>
</dbReference>
<dbReference type="InterPro" id="IPR049943">
    <property type="entry name" value="Ser_HO-MeTrfase-like"/>
</dbReference>
<dbReference type="InterPro" id="IPR019798">
    <property type="entry name" value="Ser_HO-MeTrfase_PLP_BS"/>
</dbReference>
<dbReference type="InterPro" id="IPR039429">
    <property type="entry name" value="SHMT-like_dom"/>
</dbReference>
<dbReference type="NCBIfam" id="NF000586">
    <property type="entry name" value="PRK00011.1"/>
    <property type="match status" value="1"/>
</dbReference>
<dbReference type="PANTHER" id="PTHR11680">
    <property type="entry name" value="SERINE HYDROXYMETHYLTRANSFERASE"/>
    <property type="match status" value="1"/>
</dbReference>
<dbReference type="PANTHER" id="PTHR11680:SF50">
    <property type="entry name" value="SERINE HYDROXYMETHYLTRANSFERASE"/>
    <property type="match status" value="1"/>
</dbReference>
<dbReference type="Pfam" id="PF00464">
    <property type="entry name" value="SHMT"/>
    <property type="match status" value="1"/>
</dbReference>
<dbReference type="PIRSF" id="PIRSF000412">
    <property type="entry name" value="SHMT"/>
    <property type="match status" value="1"/>
</dbReference>
<dbReference type="SUPFAM" id="SSF53383">
    <property type="entry name" value="PLP-dependent transferases"/>
    <property type="match status" value="1"/>
</dbReference>
<dbReference type="PROSITE" id="PS00096">
    <property type="entry name" value="SHMT"/>
    <property type="match status" value="1"/>
</dbReference>
<comment type="function">
    <text evidence="1">Catalyzes the reversible interconversion of serine and glycine with tetrahydrofolate (THF) serving as the one-carbon carrier. This reaction serves as the major source of one-carbon groups required for the biosynthesis of purines, thymidylate, methionine, and other important biomolecules. Also exhibits THF-independent aldolase activity toward beta-hydroxyamino acids, producing glycine and aldehydes, via a retro-aldol mechanism.</text>
</comment>
<comment type="catalytic activity">
    <reaction evidence="1">
        <text>(6R)-5,10-methylene-5,6,7,8-tetrahydrofolate + glycine + H2O = (6S)-5,6,7,8-tetrahydrofolate + L-serine</text>
        <dbReference type="Rhea" id="RHEA:15481"/>
        <dbReference type="ChEBI" id="CHEBI:15377"/>
        <dbReference type="ChEBI" id="CHEBI:15636"/>
        <dbReference type="ChEBI" id="CHEBI:33384"/>
        <dbReference type="ChEBI" id="CHEBI:57305"/>
        <dbReference type="ChEBI" id="CHEBI:57453"/>
        <dbReference type="EC" id="2.1.2.1"/>
    </reaction>
</comment>
<comment type="cofactor">
    <cofactor evidence="1">
        <name>pyridoxal 5'-phosphate</name>
        <dbReference type="ChEBI" id="CHEBI:597326"/>
    </cofactor>
</comment>
<comment type="pathway">
    <text evidence="1">One-carbon metabolism; tetrahydrofolate interconversion.</text>
</comment>
<comment type="pathway">
    <text evidence="1">Amino-acid biosynthesis; glycine biosynthesis; glycine from L-serine: step 1/1.</text>
</comment>
<comment type="subunit">
    <text evidence="1">Homodimer.</text>
</comment>
<comment type="subcellular location">
    <subcellularLocation>
        <location evidence="1">Cytoplasm</location>
    </subcellularLocation>
</comment>
<comment type="similarity">
    <text evidence="1">Belongs to the SHMT family.</text>
</comment>
<feature type="chain" id="PRO_0000113706" description="Serine hydroxymethyltransferase">
    <location>
        <begin position="1"/>
        <end position="417"/>
    </location>
</feature>
<feature type="binding site" evidence="1">
    <location>
        <position position="121"/>
    </location>
    <ligand>
        <name>(6S)-5,6,7,8-tetrahydrofolate</name>
        <dbReference type="ChEBI" id="CHEBI:57453"/>
    </ligand>
</feature>
<feature type="binding site" evidence="1">
    <location>
        <begin position="125"/>
        <end position="127"/>
    </location>
    <ligand>
        <name>(6S)-5,6,7,8-tetrahydrofolate</name>
        <dbReference type="ChEBI" id="CHEBI:57453"/>
    </ligand>
</feature>
<feature type="binding site" evidence="1">
    <location>
        <begin position="355"/>
        <end position="357"/>
    </location>
    <ligand>
        <name>(6S)-5,6,7,8-tetrahydrofolate</name>
        <dbReference type="ChEBI" id="CHEBI:57453"/>
    </ligand>
</feature>
<feature type="site" description="Plays an important role in substrate specificity" evidence="1">
    <location>
        <position position="228"/>
    </location>
</feature>
<feature type="modified residue" description="N6-(pyridoxal phosphate)lysine" evidence="1">
    <location>
        <position position="229"/>
    </location>
</feature>
<evidence type="ECO:0000255" key="1">
    <source>
        <dbReference type="HAMAP-Rule" id="MF_00051"/>
    </source>
</evidence>
<keyword id="KW-0028">Amino-acid biosynthesis</keyword>
<keyword id="KW-0963">Cytoplasm</keyword>
<keyword id="KW-0554">One-carbon metabolism</keyword>
<keyword id="KW-0663">Pyridoxal phosphate</keyword>
<keyword id="KW-0808">Transferase</keyword>
<name>GLYA_YERPS</name>
<proteinExistence type="inferred from homology"/>
<protein>
    <recommendedName>
        <fullName evidence="1">Serine hydroxymethyltransferase</fullName>
        <shortName evidence="1">SHMT</shortName>
        <shortName evidence="1">Serine methylase</shortName>
        <ecNumber evidence="1">2.1.2.1</ecNumber>
    </recommendedName>
</protein>
<reference key="1">
    <citation type="journal article" date="2004" name="Proc. Natl. Acad. Sci. U.S.A.">
        <title>Insights into the evolution of Yersinia pestis through whole-genome comparison with Yersinia pseudotuberculosis.</title>
        <authorList>
            <person name="Chain P.S.G."/>
            <person name="Carniel E."/>
            <person name="Larimer F.W."/>
            <person name="Lamerdin J."/>
            <person name="Stoutland P.O."/>
            <person name="Regala W.M."/>
            <person name="Georgescu A.M."/>
            <person name="Vergez L.M."/>
            <person name="Land M.L."/>
            <person name="Motin V.L."/>
            <person name="Brubaker R.R."/>
            <person name="Fowler J."/>
            <person name="Hinnebusch J."/>
            <person name="Marceau M."/>
            <person name="Medigue C."/>
            <person name="Simonet M."/>
            <person name="Chenal-Francisque V."/>
            <person name="Souza B."/>
            <person name="Dacheux D."/>
            <person name="Elliott J.M."/>
            <person name="Derbise A."/>
            <person name="Hauser L.J."/>
            <person name="Garcia E."/>
        </authorList>
    </citation>
    <scope>NUCLEOTIDE SEQUENCE [LARGE SCALE GENOMIC DNA]</scope>
    <source>
        <strain>IP32953</strain>
    </source>
</reference>
<organism>
    <name type="scientific">Yersinia pseudotuberculosis serotype I (strain IP32953)</name>
    <dbReference type="NCBI Taxonomy" id="273123"/>
    <lineage>
        <taxon>Bacteria</taxon>
        <taxon>Pseudomonadati</taxon>
        <taxon>Pseudomonadota</taxon>
        <taxon>Gammaproteobacteria</taxon>
        <taxon>Enterobacterales</taxon>
        <taxon>Yersiniaceae</taxon>
        <taxon>Yersinia</taxon>
    </lineage>
</organism>
<gene>
    <name evidence="1" type="primary">glyA</name>
    <name type="ordered locus">YPTB2869</name>
</gene>
<accession>Q667X1</accession>